<feature type="chain" id="PRO_1000060459" description="Probable transaldolase">
    <location>
        <begin position="1"/>
        <end position="217"/>
    </location>
</feature>
<feature type="active site" description="Schiff-base intermediate with substrate" evidence="1">
    <location>
        <position position="83"/>
    </location>
</feature>
<name>TAL_BRUA2</name>
<accession>Q2YLI1</accession>
<keyword id="KW-0963">Cytoplasm</keyword>
<keyword id="KW-0570">Pentose shunt</keyword>
<keyword id="KW-1185">Reference proteome</keyword>
<keyword id="KW-0704">Schiff base</keyword>
<keyword id="KW-0808">Transferase</keyword>
<comment type="function">
    <text evidence="1">Transaldolase is important for the balance of metabolites in the pentose-phosphate pathway.</text>
</comment>
<comment type="catalytic activity">
    <reaction evidence="1">
        <text>D-sedoheptulose 7-phosphate + D-glyceraldehyde 3-phosphate = D-erythrose 4-phosphate + beta-D-fructose 6-phosphate</text>
        <dbReference type="Rhea" id="RHEA:17053"/>
        <dbReference type="ChEBI" id="CHEBI:16897"/>
        <dbReference type="ChEBI" id="CHEBI:57483"/>
        <dbReference type="ChEBI" id="CHEBI:57634"/>
        <dbReference type="ChEBI" id="CHEBI:59776"/>
        <dbReference type="EC" id="2.2.1.2"/>
    </reaction>
</comment>
<comment type="pathway">
    <text evidence="1">Carbohydrate degradation; pentose phosphate pathway; D-glyceraldehyde 3-phosphate and beta-D-fructose 6-phosphate from D-ribose 5-phosphate and D-xylulose 5-phosphate (non-oxidative stage): step 2/3.</text>
</comment>
<comment type="subcellular location">
    <subcellularLocation>
        <location evidence="1">Cytoplasm</location>
    </subcellularLocation>
</comment>
<comment type="similarity">
    <text evidence="1">Belongs to the transaldolase family. Type 3B subfamily.</text>
</comment>
<reference key="1">
    <citation type="journal article" date="2005" name="Infect. Immun.">
        <title>Whole-genome analyses of speciation events in pathogenic Brucellae.</title>
        <authorList>
            <person name="Chain P.S."/>
            <person name="Comerci D.J."/>
            <person name="Tolmasky M.E."/>
            <person name="Larimer F.W."/>
            <person name="Malfatti S.A."/>
            <person name="Vergez L.M."/>
            <person name="Aguero F."/>
            <person name="Land M.L."/>
            <person name="Ugalde R.A."/>
            <person name="Garcia E."/>
        </authorList>
    </citation>
    <scope>NUCLEOTIDE SEQUENCE [LARGE SCALE GENOMIC DNA]</scope>
    <source>
        <strain>2308</strain>
    </source>
</reference>
<protein>
    <recommendedName>
        <fullName evidence="1">Probable transaldolase</fullName>
        <ecNumber evidence="1">2.2.1.2</ecNumber>
    </recommendedName>
</protein>
<evidence type="ECO:0000255" key="1">
    <source>
        <dbReference type="HAMAP-Rule" id="MF_00494"/>
    </source>
</evidence>
<proteinExistence type="inferred from homology"/>
<sequence length="217" mass="23359">MKFFVDTADVKEIRELNDLGLVDGVTTNPSLILKSGRDIIEVTKEICNIVKGPVSAEVAATEYEQMMKEAAVIARIADNICIKLPVTLDGLKACKALTSEGHKVNMTLCFSANQALLAAKAGATFISPFIGRLDDTGINGMELIAEIRTIYDNYDFRTEILAASVRTVNHVKEAALIGADVVTAPPATLKALVKHPLTDKGLETFLADWAKTGQKIA</sequence>
<organism>
    <name type="scientific">Brucella abortus (strain 2308)</name>
    <dbReference type="NCBI Taxonomy" id="359391"/>
    <lineage>
        <taxon>Bacteria</taxon>
        <taxon>Pseudomonadati</taxon>
        <taxon>Pseudomonadota</taxon>
        <taxon>Alphaproteobacteria</taxon>
        <taxon>Hyphomicrobiales</taxon>
        <taxon>Brucellaceae</taxon>
        <taxon>Brucella/Ochrobactrum group</taxon>
        <taxon>Brucella</taxon>
    </lineage>
</organism>
<gene>
    <name evidence="1" type="primary">tal</name>
    <name type="ordered locus">BAB1_1813</name>
</gene>
<dbReference type="EC" id="2.2.1.2" evidence="1"/>
<dbReference type="EMBL" id="AM040264">
    <property type="protein sequence ID" value="CAJ11769.1"/>
    <property type="molecule type" value="Genomic_DNA"/>
</dbReference>
<dbReference type="SMR" id="Q2YLI1"/>
<dbReference type="STRING" id="359391.BAB1_1813"/>
<dbReference type="KEGG" id="bmf:BAB1_1813"/>
<dbReference type="PATRIC" id="fig|359391.11.peg.323"/>
<dbReference type="HOGENOM" id="CLU_079764_0_0_5"/>
<dbReference type="PhylomeDB" id="Q2YLI1"/>
<dbReference type="UniPathway" id="UPA00115">
    <property type="reaction ID" value="UER00414"/>
</dbReference>
<dbReference type="Proteomes" id="UP000002719">
    <property type="component" value="Chromosome I"/>
</dbReference>
<dbReference type="GO" id="GO:0005737">
    <property type="term" value="C:cytoplasm"/>
    <property type="evidence" value="ECO:0007669"/>
    <property type="project" value="UniProtKB-SubCell"/>
</dbReference>
<dbReference type="GO" id="GO:0016832">
    <property type="term" value="F:aldehyde-lyase activity"/>
    <property type="evidence" value="ECO:0007669"/>
    <property type="project" value="InterPro"/>
</dbReference>
<dbReference type="GO" id="GO:0004801">
    <property type="term" value="F:transaldolase activity"/>
    <property type="evidence" value="ECO:0007669"/>
    <property type="project" value="UniProtKB-UniRule"/>
</dbReference>
<dbReference type="GO" id="GO:0005975">
    <property type="term" value="P:carbohydrate metabolic process"/>
    <property type="evidence" value="ECO:0007669"/>
    <property type="project" value="InterPro"/>
</dbReference>
<dbReference type="GO" id="GO:0006098">
    <property type="term" value="P:pentose-phosphate shunt"/>
    <property type="evidence" value="ECO:0007669"/>
    <property type="project" value="UniProtKB-UniRule"/>
</dbReference>
<dbReference type="CDD" id="cd00956">
    <property type="entry name" value="Transaldolase_FSA"/>
    <property type="match status" value="1"/>
</dbReference>
<dbReference type="FunFam" id="3.20.20.70:FF:000018">
    <property type="entry name" value="Probable transaldolase"/>
    <property type="match status" value="1"/>
</dbReference>
<dbReference type="Gene3D" id="3.20.20.70">
    <property type="entry name" value="Aldolase class I"/>
    <property type="match status" value="1"/>
</dbReference>
<dbReference type="HAMAP" id="MF_00494">
    <property type="entry name" value="Transaldolase_3b"/>
    <property type="match status" value="1"/>
</dbReference>
<dbReference type="InterPro" id="IPR013785">
    <property type="entry name" value="Aldolase_TIM"/>
</dbReference>
<dbReference type="InterPro" id="IPR001585">
    <property type="entry name" value="TAL/FSA"/>
</dbReference>
<dbReference type="InterPro" id="IPR022999">
    <property type="entry name" value="Transaldolase_3B"/>
</dbReference>
<dbReference type="InterPro" id="IPR004731">
    <property type="entry name" value="Transaldolase_3B/F6P_aldolase"/>
</dbReference>
<dbReference type="InterPro" id="IPR018225">
    <property type="entry name" value="Transaldolase_AS"/>
</dbReference>
<dbReference type="InterPro" id="IPR033919">
    <property type="entry name" value="TSA/FSA_arc/bac"/>
</dbReference>
<dbReference type="NCBIfam" id="TIGR00875">
    <property type="entry name" value="fsa_talC_mipB"/>
    <property type="match status" value="1"/>
</dbReference>
<dbReference type="PANTHER" id="PTHR10683:SF40">
    <property type="entry name" value="FRUCTOSE-6-PHOSPHATE ALDOLASE 1-RELATED"/>
    <property type="match status" value="1"/>
</dbReference>
<dbReference type="PANTHER" id="PTHR10683">
    <property type="entry name" value="TRANSALDOLASE"/>
    <property type="match status" value="1"/>
</dbReference>
<dbReference type="Pfam" id="PF00923">
    <property type="entry name" value="TAL_FSA"/>
    <property type="match status" value="1"/>
</dbReference>
<dbReference type="SUPFAM" id="SSF51569">
    <property type="entry name" value="Aldolase"/>
    <property type="match status" value="1"/>
</dbReference>
<dbReference type="PROSITE" id="PS01054">
    <property type="entry name" value="TRANSALDOLASE_1"/>
    <property type="match status" value="1"/>
</dbReference>
<dbReference type="PROSITE" id="PS00958">
    <property type="entry name" value="TRANSALDOLASE_2"/>
    <property type="match status" value="1"/>
</dbReference>